<organism>
    <name type="scientific">Gibberella zeae (strain ATCC MYA-4620 / CBS 123657 / FGSC 9075 / NRRL 31084 / PH-1)</name>
    <name type="common">Wheat head blight fungus</name>
    <name type="synonym">Fusarium graminearum</name>
    <dbReference type="NCBI Taxonomy" id="229533"/>
    <lineage>
        <taxon>Eukaryota</taxon>
        <taxon>Fungi</taxon>
        <taxon>Dikarya</taxon>
        <taxon>Ascomycota</taxon>
        <taxon>Pezizomycotina</taxon>
        <taxon>Sordariomycetes</taxon>
        <taxon>Hypocreomycetidae</taxon>
        <taxon>Hypocreales</taxon>
        <taxon>Nectriaceae</taxon>
        <taxon>Fusarium</taxon>
    </lineage>
</organism>
<protein>
    <recommendedName>
        <fullName>FK506-binding protein 4</fullName>
        <ecNumber evidence="2">5.2.1.8</ecNumber>
    </recommendedName>
    <alternativeName>
        <fullName evidence="2">Histone proline isomerase</fullName>
    </alternativeName>
    <alternativeName>
        <fullName>Peptidyl-prolyl cis-trans isomerase</fullName>
        <shortName>PPIase</shortName>
    </alternativeName>
    <alternativeName>
        <fullName>Rotamase</fullName>
    </alternativeName>
</protein>
<evidence type="ECO:0000250" key="1"/>
<evidence type="ECO:0000250" key="2">
    <source>
        <dbReference type="UniProtKB" id="Q06205"/>
    </source>
</evidence>
<evidence type="ECO:0000255" key="3">
    <source>
        <dbReference type="PROSITE-ProRule" id="PRU00277"/>
    </source>
</evidence>
<evidence type="ECO:0000256" key="4">
    <source>
        <dbReference type="SAM" id="MobiDB-lite"/>
    </source>
</evidence>
<evidence type="ECO:0000305" key="5"/>
<reference key="1">
    <citation type="journal article" date="2007" name="Science">
        <title>The Fusarium graminearum genome reveals a link between localized polymorphism and pathogen specialization.</title>
        <authorList>
            <person name="Cuomo C.A."/>
            <person name="Gueldener U."/>
            <person name="Xu J.-R."/>
            <person name="Trail F."/>
            <person name="Turgeon B.G."/>
            <person name="Di Pietro A."/>
            <person name="Walton J.D."/>
            <person name="Ma L.-J."/>
            <person name="Baker S.E."/>
            <person name="Rep M."/>
            <person name="Adam G."/>
            <person name="Antoniw J."/>
            <person name="Baldwin T."/>
            <person name="Calvo S.E."/>
            <person name="Chang Y.-L."/>
            <person name="DeCaprio D."/>
            <person name="Gale L.R."/>
            <person name="Gnerre S."/>
            <person name="Goswami R.S."/>
            <person name="Hammond-Kosack K."/>
            <person name="Harris L.J."/>
            <person name="Hilburn K."/>
            <person name="Kennell J.C."/>
            <person name="Kroken S."/>
            <person name="Magnuson J.K."/>
            <person name="Mannhaupt G."/>
            <person name="Mauceli E.W."/>
            <person name="Mewes H.-W."/>
            <person name="Mitterbauer R."/>
            <person name="Muehlbauer G."/>
            <person name="Muensterkoetter M."/>
            <person name="Nelson D."/>
            <person name="O'Donnell K."/>
            <person name="Ouellet T."/>
            <person name="Qi W."/>
            <person name="Quesneville H."/>
            <person name="Roncero M.I.G."/>
            <person name="Seong K.-Y."/>
            <person name="Tetko I.V."/>
            <person name="Urban M."/>
            <person name="Waalwijk C."/>
            <person name="Ward T.J."/>
            <person name="Yao J."/>
            <person name="Birren B.W."/>
            <person name="Kistler H.C."/>
        </authorList>
    </citation>
    <scope>NUCLEOTIDE SEQUENCE [LARGE SCALE GENOMIC DNA]</scope>
    <source>
        <strain>ATCC MYA-4620 / CBS 123657 / FGSC 9075 / NRRL 31084 / PH-1</strain>
    </source>
</reference>
<reference key="2">
    <citation type="journal article" date="2010" name="Nature">
        <title>Comparative genomics reveals mobile pathogenicity chromosomes in Fusarium.</title>
        <authorList>
            <person name="Ma L.-J."/>
            <person name="van der Does H.C."/>
            <person name="Borkovich K.A."/>
            <person name="Coleman J.J."/>
            <person name="Daboussi M.-J."/>
            <person name="Di Pietro A."/>
            <person name="Dufresne M."/>
            <person name="Freitag M."/>
            <person name="Grabherr M."/>
            <person name="Henrissat B."/>
            <person name="Houterman P.M."/>
            <person name="Kang S."/>
            <person name="Shim W.-B."/>
            <person name="Woloshuk C."/>
            <person name="Xie X."/>
            <person name="Xu J.-R."/>
            <person name="Antoniw J."/>
            <person name="Baker S.E."/>
            <person name="Bluhm B.H."/>
            <person name="Breakspear A."/>
            <person name="Brown D.W."/>
            <person name="Butchko R.A.E."/>
            <person name="Chapman S."/>
            <person name="Coulson R."/>
            <person name="Coutinho P.M."/>
            <person name="Danchin E.G.J."/>
            <person name="Diener A."/>
            <person name="Gale L.R."/>
            <person name="Gardiner D.M."/>
            <person name="Goff S."/>
            <person name="Hammond-Kosack K.E."/>
            <person name="Hilburn K."/>
            <person name="Hua-Van A."/>
            <person name="Jonkers W."/>
            <person name="Kazan K."/>
            <person name="Kodira C.D."/>
            <person name="Koehrsen M."/>
            <person name="Kumar L."/>
            <person name="Lee Y.-H."/>
            <person name="Li L."/>
            <person name="Manners J.M."/>
            <person name="Miranda-Saavedra D."/>
            <person name="Mukherjee M."/>
            <person name="Park G."/>
            <person name="Park J."/>
            <person name="Park S.-Y."/>
            <person name="Proctor R.H."/>
            <person name="Regev A."/>
            <person name="Ruiz-Roldan M.C."/>
            <person name="Sain D."/>
            <person name="Sakthikumar S."/>
            <person name="Sykes S."/>
            <person name="Schwartz D.C."/>
            <person name="Turgeon B.G."/>
            <person name="Wapinski I."/>
            <person name="Yoder O."/>
            <person name="Young S."/>
            <person name="Zeng Q."/>
            <person name="Zhou S."/>
            <person name="Galagan J."/>
            <person name="Cuomo C.A."/>
            <person name="Kistler H.C."/>
            <person name="Rep M."/>
        </authorList>
    </citation>
    <scope>GENOME REANNOTATION</scope>
    <source>
        <strain>ATCC MYA-4620 / CBS 123657 / FGSC 9075 / NRRL 31084 / PH-1</strain>
    </source>
</reference>
<reference key="3">
    <citation type="journal article" date="2015" name="BMC Genomics">
        <title>The completed genome sequence of the pathogenic ascomycete fungus Fusarium graminearum.</title>
        <authorList>
            <person name="King R."/>
            <person name="Urban M."/>
            <person name="Hammond-Kosack M.C.U."/>
            <person name="Hassani-Pak K."/>
            <person name="Hammond-Kosack K.E."/>
        </authorList>
    </citation>
    <scope>NUCLEOTIDE SEQUENCE [LARGE SCALE GENOMIC DNA]</scope>
    <source>
        <strain>ATCC MYA-4620 / CBS 123657 / FGSC 9075 / NRRL 31084 / PH-1</strain>
    </source>
</reference>
<accession>Q4INZ9</accession>
<accession>A0A0E0RPF0</accession>
<accession>V6QVP9</accession>
<keyword id="KW-0143">Chaperone</keyword>
<keyword id="KW-0413">Isomerase</keyword>
<keyword id="KW-0539">Nucleus</keyword>
<keyword id="KW-1185">Reference proteome</keyword>
<keyword id="KW-0697">Rotamase</keyword>
<comment type="function">
    <text evidence="2">PPIase that acts as a histone chaperone. Histone proline isomerase that increases the rate of cis-trans isomerization at prolines on the histone H3 N-terminal tail. Proline isomerization influences H3 methylation thereby regulating gene expression.</text>
</comment>
<comment type="catalytic activity">
    <reaction evidence="2">
        <text>[protein]-peptidylproline (omega=180) = [protein]-peptidylproline (omega=0)</text>
        <dbReference type="Rhea" id="RHEA:16237"/>
        <dbReference type="Rhea" id="RHEA-COMP:10747"/>
        <dbReference type="Rhea" id="RHEA-COMP:10748"/>
        <dbReference type="ChEBI" id="CHEBI:83833"/>
        <dbReference type="ChEBI" id="CHEBI:83834"/>
        <dbReference type="EC" id="5.2.1.8"/>
    </reaction>
</comment>
<comment type="activity regulation">
    <text evidence="1">Inhibited by both FK506 and rapamycin.</text>
</comment>
<comment type="subunit">
    <text evidence="2">Binds to histones H3 and H4.</text>
</comment>
<comment type="subcellular location">
    <subcellularLocation>
        <location evidence="2">Nucleus</location>
    </subcellularLocation>
</comment>
<comment type="similarity">
    <text evidence="5">Belongs to the FKBP-type PPIase family. FKBP3/4 subfamily.</text>
</comment>
<gene>
    <name type="primary">FPR4</name>
    <name type="ORF">FGRRES_01059</name>
    <name type="ORF">FGSG_01059</name>
</gene>
<feature type="chain" id="PRO_0000233082" description="FK506-binding protein 4">
    <location>
        <begin position="1"/>
        <end position="495"/>
    </location>
</feature>
<feature type="domain" description="PPIase FKBP-type" evidence="3">
    <location>
        <begin position="409"/>
        <end position="495"/>
    </location>
</feature>
<feature type="region of interest" description="Disordered" evidence="4">
    <location>
        <begin position="115"/>
        <end position="198"/>
    </location>
</feature>
<feature type="region of interest" description="Disordered" evidence="4">
    <location>
        <begin position="243"/>
        <end position="312"/>
    </location>
</feature>
<feature type="region of interest" description="Disordered" evidence="4">
    <location>
        <begin position="333"/>
        <end position="385"/>
    </location>
</feature>
<feature type="compositionally biased region" description="Acidic residues" evidence="4">
    <location>
        <begin position="116"/>
        <end position="126"/>
    </location>
</feature>
<feature type="compositionally biased region" description="Acidic residues" evidence="4">
    <location>
        <begin position="152"/>
        <end position="161"/>
    </location>
</feature>
<feature type="compositionally biased region" description="Acidic residues" evidence="4">
    <location>
        <begin position="178"/>
        <end position="196"/>
    </location>
</feature>
<feature type="compositionally biased region" description="Acidic residues" evidence="4">
    <location>
        <begin position="243"/>
        <end position="283"/>
    </location>
</feature>
<feature type="compositionally biased region" description="Basic and acidic residues" evidence="4">
    <location>
        <begin position="373"/>
        <end position="382"/>
    </location>
</feature>
<name>FKBP4_GIBZE</name>
<proteinExistence type="inferred from homology"/>
<sequence>MSAVPGPVYGLEVPPGEILIPAAMEFPASSLSVAGASFATPLVLPAGDLNSNQKILQFRITMAAVDPTEEPEADGEGNIPTVPRSTLRLVKRALPGLEDEDDEIDDEYMKALLAGSDDEEDSDEEANGGPSDPAKAKKQRQAAAIKKLLESAQEESDEEMEDAKPNGKAKGKAKATEESDDDEDEDSDDDSEEGADLENFVICTLDTERNYQQPLDITVNHGEKVFFVVTGSHTIYLTGNYIMDDDEDDEDSEDEDEYDLSPDELEYGLEGDDSDASDDLDGLEDPRVEEIDTDEEEAPKLVAANKGKNKRAAEEAAGLDELITKEDAKLSKKQQKKLKNNKGEAVAAEEKKDAKKVQFAKNLEQGPTGSTTEKPKQAKDSKPATGVKVVQGVTVDDRTVGNGRTVKSGDTVGVRYIGKLQNGKQFDANKKGKPFSFKAGKGQVIKGWDIGVIGMAIGGERRLTIPAHLAYGSRGLPGIPANSTLIFDVKLLEIK</sequence>
<dbReference type="EC" id="5.2.1.8" evidence="2"/>
<dbReference type="EMBL" id="DS231663">
    <property type="protein sequence ID" value="ESU06331.1"/>
    <property type="molecule type" value="Genomic_DNA"/>
</dbReference>
<dbReference type="EMBL" id="HG970332">
    <property type="protein sequence ID" value="CEF73125.1"/>
    <property type="molecule type" value="Genomic_DNA"/>
</dbReference>
<dbReference type="RefSeq" id="XP_011316816.1">
    <property type="nucleotide sequence ID" value="XM_011318514.1"/>
</dbReference>
<dbReference type="SMR" id="Q4INZ9"/>
<dbReference type="FunCoup" id="Q4INZ9">
    <property type="interactions" value="553"/>
</dbReference>
<dbReference type="STRING" id="229533.Q4INZ9"/>
<dbReference type="GeneID" id="23548516"/>
<dbReference type="KEGG" id="fgr:FGSG_01059"/>
<dbReference type="VEuPathDB" id="FungiDB:FGRAMPH1_01G02647"/>
<dbReference type="eggNOG" id="KOG0552">
    <property type="taxonomic scope" value="Eukaryota"/>
</dbReference>
<dbReference type="HOGENOM" id="CLU_022297_3_1_1"/>
<dbReference type="InParanoid" id="Q4INZ9"/>
<dbReference type="OrthoDB" id="132113at110618"/>
<dbReference type="Proteomes" id="UP000070720">
    <property type="component" value="Chromosome 1"/>
</dbReference>
<dbReference type="GO" id="GO:0000785">
    <property type="term" value="C:chromatin"/>
    <property type="evidence" value="ECO:0007669"/>
    <property type="project" value="TreeGrafter"/>
</dbReference>
<dbReference type="GO" id="GO:0005730">
    <property type="term" value="C:nucleolus"/>
    <property type="evidence" value="ECO:0007669"/>
    <property type="project" value="TreeGrafter"/>
</dbReference>
<dbReference type="GO" id="GO:0003755">
    <property type="term" value="F:peptidyl-prolyl cis-trans isomerase activity"/>
    <property type="evidence" value="ECO:0007669"/>
    <property type="project" value="UniProtKB-KW"/>
</dbReference>
<dbReference type="FunFam" id="3.10.50.40:FF:000006">
    <property type="entry name" value="Peptidyl-prolyl cis-trans isomerase"/>
    <property type="match status" value="1"/>
</dbReference>
<dbReference type="Gene3D" id="3.10.50.40">
    <property type="match status" value="1"/>
</dbReference>
<dbReference type="Gene3D" id="2.60.120.340">
    <property type="entry name" value="Nucleoplasmin core domain"/>
    <property type="match status" value="1"/>
</dbReference>
<dbReference type="InterPro" id="IPR041232">
    <property type="entry name" value="NPL"/>
</dbReference>
<dbReference type="InterPro" id="IPR046357">
    <property type="entry name" value="PPIase_dom_sf"/>
</dbReference>
<dbReference type="InterPro" id="IPR001179">
    <property type="entry name" value="PPIase_FKBP_dom"/>
</dbReference>
<dbReference type="InterPro" id="IPR023566">
    <property type="entry name" value="PPIase_Fpr3/Fpr4-like"/>
</dbReference>
<dbReference type="PANTHER" id="PTHR43811:SF19">
    <property type="entry name" value="39 KDA FK506-BINDING NUCLEAR PROTEIN"/>
    <property type="match status" value="1"/>
</dbReference>
<dbReference type="PANTHER" id="PTHR43811">
    <property type="entry name" value="FKBP-TYPE PEPTIDYL-PROLYL CIS-TRANS ISOMERASE FKPA"/>
    <property type="match status" value="1"/>
</dbReference>
<dbReference type="Pfam" id="PF00254">
    <property type="entry name" value="FKBP_C"/>
    <property type="match status" value="1"/>
</dbReference>
<dbReference type="Pfam" id="PF17800">
    <property type="entry name" value="NPL"/>
    <property type="match status" value="1"/>
</dbReference>
<dbReference type="PIRSF" id="PIRSF001473">
    <property type="entry name" value="FK506-bp_FPR3"/>
    <property type="match status" value="1"/>
</dbReference>
<dbReference type="SUPFAM" id="SSF54534">
    <property type="entry name" value="FKBP-like"/>
    <property type="match status" value="1"/>
</dbReference>
<dbReference type="PROSITE" id="PS50059">
    <property type="entry name" value="FKBP_PPIASE"/>
    <property type="match status" value="1"/>
</dbReference>